<accession>Q0I891</accession>
<keyword id="KW-0997">Cell inner membrane</keyword>
<keyword id="KW-1003">Cell membrane</keyword>
<keyword id="KW-0350">Heme biosynthesis</keyword>
<keyword id="KW-0472">Membrane</keyword>
<keyword id="KW-1185">Reference proteome</keyword>
<keyword id="KW-0808">Transferase</keyword>
<keyword id="KW-0812">Transmembrane</keyword>
<keyword id="KW-1133">Transmembrane helix</keyword>
<proteinExistence type="inferred from homology"/>
<organism>
    <name type="scientific">Synechococcus sp. (strain CC9311)</name>
    <dbReference type="NCBI Taxonomy" id="64471"/>
    <lineage>
        <taxon>Bacteria</taxon>
        <taxon>Bacillati</taxon>
        <taxon>Cyanobacteriota</taxon>
        <taxon>Cyanophyceae</taxon>
        <taxon>Synechococcales</taxon>
        <taxon>Synechococcaceae</taxon>
        <taxon>Synechococcus</taxon>
    </lineage>
</organism>
<dbReference type="EC" id="2.5.1.141" evidence="1"/>
<dbReference type="EMBL" id="CP000435">
    <property type="protein sequence ID" value="ABI47837.1"/>
    <property type="molecule type" value="Genomic_DNA"/>
</dbReference>
<dbReference type="RefSeq" id="WP_011620043.1">
    <property type="nucleotide sequence ID" value="NC_008319.1"/>
</dbReference>
<dbReference type="SMR" id="Q0I891"/>
<dbReference type="STRING" id="64471.sync_2129"/>
<dbReference type="KEGG" id="syg:sync_2129"/>
<dbReference type="eggNOG" id="COG0109">
    <property type="taxonomic scope" value="Bacteria"/>
</dbReference>
<dbReference type="HOGENOM" id="CLU_029631_0_2_3"/>
<dbReference type="UniPathway" id="UPA00834">
    <property type="reaction ID" value="UER00712"/>
</dbReference>
<dbReference type="Proteomes" id="UP000001961">
    <property type="component" value="Chromosome"/>
</dbReference>
<dbReference type="GO" id="GO:0005886">
    <property type="term" value="C:plasma membrane"/>
    <property type="evidence" value="ECO:0007669"/>
    <property type="project" value="UniProtKB-SubCell"/>
</dbReference>
<dbReference type="GO" id="GO:0008495">
    <property type="term" value="F:protoheme IX farnesyltransferase activity"/>
    <property type="evidence" value="ECO:0007669"/>
    <property type="project" value="UniProtKB-UniRule"/>
</dbReference>
<dbReference type="GO" id="GO:0048034">
    <property type="term" value="P:heme O biosynthetic process"/>
    <property type="evidence" value="ECO:0007669"/>
    <property type="project" value="UniProtKB-UniRule"/>
</dbReference>
<dbReference type="CDD" id="cd13957">
    <property type="entry name" value="PT_UbiA_Cox10"/>
    <property type="match status" value="1"/>
</dbReference>
<dbReference type="Gene3D" id="1.10.357.140">
    <property type="entry name" value="UbiA prenyltransferase"/>
    <property type="match status" value="1"/>
</dbReference>
<dbReference type="HAMAP" id="MF_00154">
    <property type="entry name" value="CyoE_CtaB"/>
    <property type="match status" value="1"/>
</dbReference>
<dbReference type="InterPro" id="IPR006369">
    <property type="entry name" value="Protohaem_IX_farnesylTrfase"/>
</dbReference>
<dbReference type="InterPro" id="IPR000537">
    <property type="entry name" value="UbiA_prenyltransferase"/>
</dbReference>
<dbReference type="InterPro" id="IPR030470">
    <property type="entry name" value="UbiA_prenylTrfase_CS"/>
</dbReference>
<dbReference type="InterPro" id="IPR044878">
    <property type="entry name" value="UbiA_sf"/>
</dbReference>
<dbReference type="NCBIfam" id="TIGR01473">
    <property type="entry name" value="cyoE_ctaB"/>
    <property type="match status" value="1"/>
</dbReference>
<dbReference type="NCBIfam" id="NF003349">
    <property type="entry name" value="PRK04375.1-2"/>
    <property type="match status" value="1"/>
</dbReference>
<dbReference type="PANTHER" id="PTHR43448:SF7">
    <property type="entry name" value="4-HYDROXYBENZOATE SOLANESYLTRANSFERASE"/>
    <property type="match status" value="1"/>
</dbReference>
<dbReference type="PANTHER" id="PTHR43448">
    <property type="entry name" value="PROTOHEME IX FARNESYLTRANSFERASE, MITOCHONDRIAL"/>
    <property type="match status" value="1"/>
</dbReference>
<dbReference type="Pfam" id="PF01040">
    <property type="entry name" value="UbiA"/>
    <property type="match status" value="1"/>
</dbReference>
<dbReference type="PROSITE" id="PS00943">
    <property type="entry name" value="UBIA"/>
    <property type="match status" value="1"/>
</dbReference>
<sequence>MPPSLTREEVVPSRKRIKLPPWLEVAKPRLIPLLLATTLGGMALTEGWPLSSPRLVCTLGGGALAAAAAGVLNCLWEQELDGRMLRTSGRALPSGRLSPSAAFVGAVSCTLAAAALLVSGVNCLAAGLSLLGLCSYVLLYTALLKPRTTQNIVVGGVAGAIPPLVGAAAATGHIGLGGWWLFALVMVWTPAHFWALALLLHDDYRAVGIPMLPVVKGPLVTTRAIRRYGWATILLSFLGIWALPEGGALYGLLILPFNGRLLQMVERLAAEPNNRDRAKGLFRWSILYLFGVCLLLVMSRMSGAAQFDLQVRAVVDILSGGFLTVAS</sequence>
<name>COXX_SYNS3</name>
<evidence type="ECO:0000255" key="1">
    <source>
        <dbReference type="HAMAP-Rule" id="MF_00154"/>
    </source>
</evidence>
<gene>
    <name evidence="1" type="primary">ctaB</name>
    <name type="ordered locus">sync_2129</name>
</gene>
<reference key="1">
    <citation type="journal article" date="2006" name="Proc. Natl. Acad. Sci. U.S.A.">
        <title>Genome sequence of Synechococcus CC9311: insights into adaptation to a coastal environment.</title>
        <authorList>
            <person name="Palenik B."/>
            <person name="Ren Q."/>
            <person name="Dupont C.L."/>
            <person name="Myers G.S."/>
            <person name="Heidelberg J.F."/>
            <person name="Badger J.H."/>
            <person name="Madupu R."/>
            <person name="Nelson W.C."/>
            <person name="Brinkac L.M."/>
            <person name="Dodson R.J."/>
            <person name="Durkin A.S."/>
            <person name="Daugherty S.C."/>
            <person name="Sullivan S.A."/>
            <person name="Khouri H."/>
            <person name="Mohamoud Y."/>
            <person name="Halpin R."/>
            <person name="Paulsen I.T."/>
        </authorList>
    </citation>
    <scope>NUCLEOTIDE SEQUENCE [LARGE SCALE GENOMIC DNA]</scope>
    <source>
        <strain>CC9311</strain>
    </source>
</reference>
<protein>
    <recommendedName>
        <fullName evidence="1">Protoheme IX farnesyltransferase</fullName>
        <ecNumber evidence="1">2.5.1.141</ecNumber>
    </recommendedName>
    <alternativeName>
        <fullName evidence="1">Heme B farnesyltransferase</fullName>
    </alternativeName>
    <alternativeName>
        <fullName evidence="1">Heme O synthase</fullName>
    </alternativeName>
</protein>
<comment type="function">
    <text evidence="1">Converts heme B (protoheme IX) to heme O by substitution of the vinyl group on carbon 2 of heme B porphyrin ring with a hydroxyethyl farnesyl side group.</text>
</comment>
<comment type="catalytic activity">
    <reaction evidence="1">
        <text>heme b + (2E,6E)-farnesyl diphosphate + H2O = Fe(II)-heme o + diphosphate</text>
        <dbReference type="Rhea" id="RHEA:28070"/>
        <dbReference type="ChEBI" id="CHEBI:15377"/>
        <dbReference type="ChEBI" id="CHEBI:33019"/>
        <dbReference type="ChEBI" id="CHEBI:60344"/>
        <dbReference type="ChEBI" id="CHEBI:60530"/>
        <dbReference type="ChEBI" id="CHEBI:175763"/>
        <dbReference type="EC" id="2.5.1.141"/>
    </reaction>
</comment>
<comment type="pathway">
    <text evidence="1">Porphyrin-containing compound metabolism; heme O biosynthesis; heme O from protoheme: step 1/1.</text>
</comment>
<comment type="subcellular location">
    <subcellularLocation>
        <location evidence="1">Cell inner membrane</location>
        <topology evidence="1">Multi-pass membrane protein</topology>
    </subcellularLocation>
</comment>
<comment type="miscellaneous">
    <text evidence="1">Carbon 2 of the heme B porphyrin ring is defined according to the Fischer nomenclature.</text>
</comment>
<comment type="similarity">
    <text evidence="1">Belongs to the UbiA prenyltransferase family. Protoheme IX farnesyltransferase subfamily.</text>
</comment>
<feature type="chain" id="PRO_0000327173" description="Protoheme IX farnesyltransferase">
    <location>
        <begin position="1"/>
        <end position="327"/>
    </location>
</feature>
<feature type="transmembrane region" description="Helical" evidence="1">
    <location>
        <begin position="55"/>
        <end position="75"/>
    </location>
</feature>
<feature type="transmembrane region" description="Helical" evidence="1">
    <location>
        <begin position="101"/>
        <end position="121"/>
    </location>
</feature>
<feature type="transmembrane region" description="Helical" evidence="1">
    <location>
        <begin position="124"/>
        <end position="144"/>
    </location>
</feature>
<feature type="transmembrane region" description="Helical" evidence="1">
    <location>
        <begin position="152"/>
        <end position="172"/>
    </location>
</feature>
<feature type="transmembrane region" description="Helical" evidence="1">
    <location>
        <begin position="180"/>
        <end position="200"/>
    </location>
</feature>
<feature type="transmembrane region" description="Helical" evidence="1">
    <location>
        <begin position="237"/>
        <end position="257"/>
    </location>
</feature>
<feature type="transmembrane region" description="Helical" evidence="1">
    <location>
        <begin position="278"/>
        <end position="298"/>
    </location>
</feature>